<comment type="function">
    <text evidence="1">Major role in the synthesis of nucleoside triphosphates other than ATP. The ATP gamma phosphate is transferred to the NDP beta phosphate via a ping-pong mechanism, using a phosphorylated active-site intermediate.</text>
</comment>
<comment type="catalytic activity">
    <reaction evidence="1">
        <text>a 2'-deoxyribonucleoside 5'-diphosphate + ATP = a 2'-deoxyribonucleoside 5'-triphosphate + ADP</text>
        <dbReference type="Rhea" id="RHEA:44640"/>
        <dbReference type="ChEBI" id="CHEBI:30616"/>
        <dbReference type="ChEBI" id="CHEBI:61560"/>
        <dbReference type="ChEBI" id="CHEBI:73316"/>
        <dbReference type="ChEBI" id="CHEBI:456216"/>
        <dbReference type="EC" id="2.7.4.6"/>
    </reaction>
</comment>
<comment type="catalytic activity">
    <reaction evidence="1">
        <text>a ribonucleoside 5'-diphosphate + ATP = a ribonucleoside 5'-triphosphate + ADP</text>
        <dbReference type="Rhea" id="RHEA:18113"/>
        <dbReference type="ChEBI" id="CHEBI:30616"/>
        <dbReference type="ChEBI" id="CHEBI:57930"/>
        <dbReference type="ChEBI" id="CHEBI:61557"/>
        <dbReference type="ChEBI" id="CHEBI:456216"/>
        <dbReference type="EC" id="2.7.4.6"/>
    </reaction>
</comment>
<comment type="cofactor">
    <cofactor evidence="1">
        <name>Mg(2+)</name>
        <dbReference type="ChEBI" id="CHEBI:18420"/>
    </cofactor>
</comment>
<comment type="subunit">
    <text evidence="1">Homotetramer.</text>
</comment>
<comment type="subcellular location">
    <subcellularLocation>
        <location evidence="1">Cytoplasm</location>
    </subcellularLocation>
</comment>
<comment type="similarity">
    <text evidence="1">Belongs to the NDK family.</text>
</comment>
<proteinExistence type="inferred from homology"/>
<evidence type="ECO:0000255" key="1">
    <source>
        <dbReference type="HAMAP-Rule" id="MF_00451"/>
    </source>
</evidence>
<name>NDK_SHIF8</name>
<reference key="1">
    <citation type="journal article" date="2006" name="BMC Genomics">
        <title>Complete genome sequence of Shigella flexneri 5b and comparison with Shigella flexneri 2a.</title>
        <authorList>
            <person name="Nie H."/>
            <person name="Yang F."/>
            <person name="Zhang X."/>
            <person name="Yang J."/>
            <person name="Chen L."/>
            <person name="Wang J."/>
            <person name="Xiong Z."/>
            <person name="Peng J."/>
            <person name="Sun L."/>
            <person name="Dong J."/>
            <person name="Xue Y."/>
            <person name="Xu X."/>
            <person name="Chen S."/>
            <person name="Yao Z."/>
            <person name="Shen Y."/>
            <person name="Jin Q."/>
        </authorList>
    </citation>
    <scope>NUCLEOTIDE SEQUENCE [LARGE SCALE GENOMIC DNA]</scope>
    <source>
        <strain>8401</strain>
    </source>
</reference>
<accession>Q0T201</accession>
<feature type="chain" id="PRO_1000026298" description="Nucleoside diphosphate kinase">
    <location>
        <begin position="1"/>
        <end position="143"/>
    </location>
</feature>
<feature type="active site" description="Pros-phosphohistidine intermediate" evidence="1">
    <location>
        <position position="117"/>
    </location>
</feature>
<feature type="binding site" evidence="1">
    <location>
        <position position="11"/>
    </location>
    <ligand>
        <name>ATP</name>
        <dbReference type="ChEBI" id="CHEBI:30616"/>
    </ligand>
</feature>
<feature type="binding site" evidence="1">
    <location>
        <position position="59"/>
    </location>
    <ligand>
        <name>ATP</name>
        <dbReference type="ChEBI" id="CHEBI:30616"/>
    </ligand>
</feature>
<feature type="binding site" evidence="1">
    <location>
        <position position="87"/>
    </location>
    <ligand>
        <name>ATP</name>
        <dbReference type="ChEBI" id="CHEBI:30616"/>
    </ligand>
</feature>
<feature type="binding site" evidence="1">
    <location>
        <position position="93"/>
    </location>
    <ligand>
        <name>ATP</name>
        <dbReference type="ChEBI" id="CHEBI:30616"/>
    </ligand>
</feature>
<feature type="binding site" evidence="1">
    <location>
        <position position="104"/>
    </location>
    <ligand>
        <name>ATP</name>
        <dbReference type="ChEBI" id="CHEBI:30616"/>
    </ligand>
</feature>
<feature type="binding site" evidence="1">
    <location>
        <position position="114"/>
    </location>
    <ligand>
        <name>ATP</name>
        <dbReference type="ChEBI" id="CHEBI:30616"/>
    </ligand>
</feature>
<dbReference type="EC" id="2.7.4.6" evidence="1"/>
<dbReference type="EMBL" id="CP000266">
    <property type="protein sequence ID" value="ABF04664.1"/>
    <property type="molecule type" value="Genomic_DNA"/>
</dbReference>
<dbReference type="RefSeq" id="WP_000963837.1">
    <property type="nucleotide sequence ID" value="NC_008258.1"/>
</dbReference>
<dbReference type="SMR" id="Q0T201"/>
<dbReference type="GeneID" id="93774618"/>
<dbReference type="KEGG" id="sfv:SFV_2565"/>
<dbReference type="HOGENOM" id="CLU_060216_8_1_6"/>
<dbReference type="Proteomes" id="UP000000659">
    <property type="component" value="Chromosome"/>
</dbReference>
<dbReference type="GO" id="GO:0005737">
    <property type="term" value="C:cytoplasm"/>
    <property type="evidence" value="ECO:0007669"/>
    <property type="project" value="UniProtKB-SubCell"/>
</dbReference>
<dbReference type="GO" id="GO:0005524">
    <property type="term" value="F:ATP binding"/>
    <property type="evidence" value="ECO:0007669"/>
    <property type="project" value="UniProtKB-UniRule"/>
</dbReference>
<dbReference type="GO" id="GO:0046872">
    <property type="term" value="F:metal ion binding"/>
    <property type="evidence" value="ECO:0007669"/>
    <property type="project" value="UniProtKB-KW"/>
</dbReference>
<dbReference type="GO" id="GO:0004550">
    <property type="term" value="F:nucleoside diphosphate kinase activity"/>
    <property type="evidence" value="ECO:0007669"/>
    <property type="project" value="UniProtKB-UniRule"/>
</dbReference>
<dbReference type="GO" id="GO:0006241">
    <property type="term" value="P:CTP biosynthetic process"/>
    <property type="evidence" value="ECO:0007669"/>
    <property type="project" value="UniProtKB-UniRule"/>
</dbReference>
<dbReference type="GO" id="GO:0006183">
    <property type="term" value="P:GTP biosynthetic process"/>
    <property type="evidence" value="ECO:0007669"/>
    <property type="project" value="UniProtKB-UniRule"/>
</dbReference>
<dbReference type="GO" id="GO:0006228">
    <property type="term" value="P:UTP biosynthetic process"/>
    <property type="evidence" value="ECO:0007669"/>
    <property type="project" value="UniProtKB-UniRule"/>
</dbReference>
<dbReference type="CDD" id="cd04413">
    <property type="entry name" value="NDPk_I"/>
    <property type="match status" value="1"/>
</dbReference>
<dbReference type="FunFam" id="3.30.70.141:FF:000001">
    <property type="entry name" value="Nucleoside diphosphate kinase"/>
    <property type="match status" value="1"/>
</dbReference>
<dbReference type="Gene3D" id="3.30.70.141">
    <property type="entry name" value="Nucleoside diphosphate kinase-like domain"/>
    <property type="match status" value="1"/>
</dbReference>
<dbReference type="HAMAP" id="MF_00451">
    <property type="entry name" value="NDP_kinase"/>
    <property type="match status" value="1"/>
</dbReference>
<dbReference type="InterPro" id="IPR034907">
    <property type="entry name" value="NDK-like_dom"/>
</dbReference>
<dbReference type="InterPro" id="IPR036850">
    <property type="entry name" value="NDK-like_dom_sf"/>
</dbReference>
<dbReference type="InterPro" id="IPR001564">
    <property type="entry name" value="Nucleoside_diP_kinase"/>
</dbReference>
<dbReference type="InterPro" id="IPR023005">
    <property type="entry name" value="Nucleoside_diP_kinase_AS"/>
</dbReference>
<dbReference type="NCBIfam" id="NF001908">
    <property type="entry name" value="PRK00668.1"/>
    <property type="match status" value="1"/>
</dbReference>
<dbReference type="PANTHER" id="PTHR46161">
    <property type="entry name" value="NUCLEOSIDE DIPHOSPHATE KINASE"/>
    <property type="match status" value="1"/>
</dbReference>
<dbReference type="PANTHER" id="PTHR46161:SF3">
    <property type="entry name" value="NUCLEOSIDE DIPHOSPHATE KINASE DDB_G0292928-RELATED"/>
    <property type="match status" value="1"/>
</dbReference>
<dbReference type="Pfam" id="PF00334">
    <property type="entry name" value="NDK"/>
    <property type="match status" value="1"/>
</dbReference>
<dbReference type="PRINTS" id="PR01243">
    <property type="entry name" value="NUCDPKINASE"/>
</dbReference>
<dbReference type="SMART" id="SM00562">
    <property type="entry name" value="NDK"/>
    <property type="match status" value="1"/>
</dbReference>
<dbReference type="SUPFAM" id="SSF54919">
    <property type="entry name" value="Nucleoside diphosphate kinase, NDK"/>
    <property type="match status" value="1"/>
</dbReference>
<dbReference type="PROSITE" id="PS00469">
    <property type="entry name" value="NDPK"/>
    <property type="match status" value="1"/>
</dbReference>
<dbReference type="PROSITE" id="PS51374">
    <property type="entry name" value="NDPK_LIKE"/>
    <property type="match status" value="1"/>
</dbReference>
<protein>
    <recommendedName>
        <fullName evidence="1">Nucleoside diphosphate kinase</fullName>
        <shortName evidence="1">NDK</shortName>
        <shortName evidence="1">NDP kinase</shortName>
        <ecNumber evidence="1">2.7.4.6</ecNumber>
    </recommendedName>
    <alternativeName>
        <fullName evidence="1">Nucleoside-2-P kinase</fullName>
    </alternativeName>
</protein>
<sequence>MAIERTFSIIKPNAVAKNVIGNIFARFEAAGFKIVGTKMLHLTVEQARGFYAEHDGKPFFDGLVEFMTSGPIVVSVLEGENAVQRHRDLLGATNPANALAGTLRADYADSLTENGTHGSDSVESAAREIAYFFGEGEVCPRTR</sequence>
<gene>
    <name evidence="1" type="primary">ndk</name>
    <name type="ordered locus">SFV_2565</name>
</gene>
<organism>
    <name type="scientific">Shigella flexneri serotype 5b (strain 8401)</name>
    <dbReference type="NCBI Taxonomy" id="373384"/>
    <lineage>
        <taxon>Bacteria</taxon>
        <taxon>Pseudomonadati</taxon>
        <taxon>Pseudomonadota</taxon>
        <taxon>Gammaproteobacteria</taxon>
        <taxon>Enterobacterales</taxon>
        <taxon>Enterobacteriaceae</taxon>
        <taxon>Shigella</taxon>
    </lineage>
</organism>
<keyword id="KW-0067">ATP-binding</keyword>
<keyword id="KW-0963">Cytoplasm</keyword>
<keyword id="KW-0418">Kinase</keyword>
<keyword id="KW-0460">Magnesium</keyword>
<keyword id="KW-0479">Metal-binding</keyword>
<keyword id="KW-0546">Nucleotide metabolism</keyword>
<keyword id="KW-0547">Nucleotide-binding</keyword>
<keyword id="KW-0597">Phosphoprotein</keyword>
<keyword id="KW-0808">Transferase</keyword>